<name>PANC_STAAR</name>
<feature type="chain" id="PRO_0000128270" description="Pantothenate synthetase">
    <location>
        <begin position="1"/>
        <end position="283"/>
    </location>
</feature>
<feature type="active site" description="Proton donor" evidence="1">
    <location>
        <position position="38"/>
    </location>
</feature>
<feature type="binding site" evidence="1">
    <location>
        <begin position="31"/>
        <end position="38"/>
    </location>
    <ligand>
        <name>ATP</name>
        <dbReference type="ChEBI" id="CHEBI:30616"/>
    </ligand>
</feature>
<feature type="binding site" evidence="1">
    <location>
        <position position="62"/>
    </location>
    <ligand>
        <name>(R)-pantoate</name>
        <dbReference type="ChEBI" id="CHEBI:15980"/>
    </ligand>
</feature>
<feature type="binding site" evidence="1">
    <location>
        <position position="62"/>
    </location>
    <ligand>
        <name>beta-alanine</name>
        <dbReference type="ChEBI" id="CHEBI:57966"/>
    </ligand>
</feature>
<feature type="binding site" evidence="1">
    <location>
        <begin position="148"/>
        <end position="151"/>
    </location>
    <ligand>
        <name>ATP</name>
        <dbReference type="ChEBI" id="CHEBI:30616"/>
    </ligand>
</feature>
<feature type="binding site" evidence="1">
    <location>
        <position position="154"/>
    </location>
    <ligand>
        <name>(R)-pantoate</name>
        <dbReference type="ChEBI" id="CHEBI:15980"/>
    </ligand>
</feature>
<feature type="binding site" evidence="1">
    <location>
        <position position="177"/>
    </location>
    <ligand>
        <name>ATP</name>
        <dbReference type="ChEBI" id="CHEBI:30616"/>
    </ligand>
</feature>
<feature type="binding site" evidence="1">
    <location>
        <begin position="185"/>
        <end position="188"/>
    </location>
    <ligand>
        <name>ATP</name>
        <dbReference type="ChEBI" id="CHEBI:30616"/>
    </ligand>
</feature>
<feature type="strand" evidence="2">
    <location>
        <begin position="3"/>
        <end position="5"/>
    </location>
</feature>
<feature type="helix" evidence="2">
    <location>
        <begin position="8"/>
        <end position="21"/>
    </location>
</feature>
<feature type="strand" evidence="2">
    <location>
        <begin position="25"/>
        <end position="30"/>
    </location>
</feature>
<feature type="helix" evidence="2">
    <location>
        <begin position="36"/>
        <end position="48"/>
    </location>
</feature>
<feature type="strand" evidence="2">
    <location>
        <begin position="49"/>
        <end position="56"/>
    </location>
</feature>
<feature type="helix" evidence="2">
    <location>
        <begin position="60"/>
        <end position="62"/>
    </location>
</feature>
<feature type="turn" evidence="2">
    <location>
        <begin position="69"/>
        <end position="71"/>
    </location>
</feature>
<feature type="helix" evidence="2">
    <location>
        <begin position="76"/>
        <end position="85"/>
    </location>
</feature>
<feature type="strand" evidence="2">
    <location>
        <begin position="90"/>
        <end position="92"/>
    </location>
</feature>
<feature type="helix" evidence="2">
    <location>
        <begin position="96"/>
        <end position="99"/>
    </location>
</feature>
<feature type="strand" evidence="2">
    <location>
        <begin position="105"/>
        <end position="110"/>
    </location>
</feature>
<feature type="helix" evidence="2">
    <location>
        <begin position="112"/>
        <end position="114"/>
    </location>
</feature>
<feature type="helix" evidence="2">
    <location>
        <begin position="118"/>
        <end position="121"/>
    </location>
</feature>
<feature type="helix" evidence="2">
    <location>
        <begin position="125"/>
        <end position="140"/>
    </location>
</feature>
<feature type="strand" evidence="2">
    <location>
        <begin position="143"/>
        <end position="148"/>
    </location>
</feature>
<feature type="helix" evidence="2">
    <location>
        <begin position="149"/>
        <end position="151"/>
    </location>
</feature>
<feature type="helix" evidence="2">
    <location>
        <begin position="152"/>
        <end position="165"/>
    </location>
</feature>
<feature type="strand" evidence="2">
    <location>
        <begin position="170"/>
        <end position="174"/>
    </location>
</feature>
<feature type="helix" evidence="2">
    <location>
        <begin position="187"/>
        <end position="191"/>
    </location>
</feature>
<feature type="helix" evidence="2">
    <location>
        <begin position="194"/>
        <end position="200"/>
    </location>
</feature>
<feature type="helix" evidence="2">
    <location>
        <begin position="202"/>
        <end position="215"/>
    </location>
</feature>
<feature type="helix" evidence="2">
    <location>
        <begin position="221"/>
        <end position="233"/>
    </location>
</feature>
<feature type="strand" evidence="2">
    <location>
        <begin position="237"/>
        <end position="247"/>
    </location>
</feature>
<feature type="turn" evidence="2">
    <location>
        <begin position="248"/>
        <end position="250"/>
    </location>
</feature>
<feature type="strand" evidence="2">
    <location>
        <begin position="259"/>
        <end position="268"/>
    </location>
</feature>
<feature type="strand" evidence="2">
    <location>
        <begin position="273"/>
        <end position="280"/>
    </location>
</feature>
<organism>
    <name type="scientific">Staphylococcus aureus (strain MRSA252)</name>
    <dbReference type="NCBI Taxonomy" id="282458"/>
    <lineage>
        <taxon>Bacteria</taxon>
        <taxon>Bacillati</taxon>
        <taxon>Bacillota</taxon>
        <taxon>Bacilli</taxon>
        <taxon>Bacillales</taxon>
        <taxon>Staphylococcaceae</taxon>
        <taxon>Staphylococcus</taxon>
    </lineage>
</organism>
<comment type="function">
    <text evidence="1">Catalyzes the condensation of pantoate with beta-alanine in an ATP-dependent reaction via a pantoyl-adenylate intermediate.</text>
</comment>
<comment type="catalytic activity">
    <reaction evidence="1">
        <text>(R)-pantoate + beta-alanine + ATP = (R)-pantothenate + AMP + diphosphate + H(+)</text>
        <dbReference type="Rhea" id="RHEA:10912"/>
        <dbReference type="ChEBI" id="CHEBI:15378"/>
        <dbReference type="ChEBI" id="CHEBI:15980"/>
        <dbReference type="ChEBI" id="CHEBI:29032"/>
        <dbReference type="ChEBI" id="CHEBI:30616"/>
        <dbReference type="ChEBI" id="CHEBI:33019"/>
        <dbReference type="ChEBI" id="CHEBI:57966"/>
        <dbReference type="ChEBI" id="CHEBI:456215"/>
        <dbReference type="EC" id="6.3.2.1"/>
    </reaction>
</comment>
<comment type="pathway">
    <text evidence="1">Cofactor biosynthesis; (R)-pantothenate biosynthesis; (R)-pantothenate from (R)-pantoate and beta-alanine: step 1/1.</text>
</comment>
<comment type="subunit">
    <text evidence="1">Homodimer.</text>
</comment>
<comment type="subcellular location">
    <subcellularLocation>
        <location evidence="1">Cytoplasm</location>
    </subcellularLocation>
</comment>
<comment type="miscellaneous">
    <text evidence="1">The reaction proceeds by a bi uni uni bi ping pong mechanism.</text>
</comment>
<comment type="similarity">
    <text evidence="1">Belongs to the pantothenate synthetase family.</text>
</comment>
<accession>Q6GDK5</accession>
<evidence type="ECO:0000255" key="1">
    <source>
        <dbReference type="HAMAP-Rule" id="MF_00158"/>
    </source>
</evidence>
<evidence type="ECO:0007829" key="2">
    <source>
        <dbReference type="PDB" id="2X3F"/>
    </source>
</evidence>
<keyword id="KW-0002">3D-structure</keyword>
<keyword id="KW-0067">ATP-binding</keyword>
<keyword id="KW-0963">Cytoplasm</keyword>
<keyword id="KW-0436">Ligase</keyword>
<keyword id="KW-0547">Nucleotide-binding</keyword>
<keyword id="KW-0566">Pantothenate biosynthesis</keyword>
<dbReference type="EC" id="6.3.2.1" evidence="1"/>
<dbReference type="EMBL" id="BX571856">
    <property type="protein sequence ID" value="CAG41653.1"/>
    <property type="molecule type" value="Genomic_DNA"/>
</dbReference>
<dbReference type="RefSeq" id="WP_000163741.1">
    <property type="nucleotide sequence ID" value="NC_002952.2"/>
</dbReference>
<dbReference type="PDB" id="2X3F">
    <property type="method" value="X-ray"/>
    <property type="resolution" value="1.95 A"/>
    <property type="chains" value="A/B=1-283"/>
</dbReference>
<dbReference type="PDBsum" id="2X3F"/>
<dbReference type="SMR" id="Q6GDK5"/>
<dbReference type="KEGG" id="sar:SAR2676"/>
<dbReference type="HOGENOM" id="CLU_047148_0_0_9"/>
<dbReference type="UniPathway" id="UPA00028">
    <property type="reaction ID" value="UER00005"/>
</dbReference>
<dbReference type="EvolutionaryTrace" id="Q6GDK5"/>
<dbReference type="Proteomes" id="UP000000596">
    <property type="component" value="Chromosome"/>
</dbReference>
<dbReference type="GO" id="GO:0005829">
    <property type="term" value="C:cytosol"/>
    <property type="evidence" value="ECO:0007669"/>
    <property type="project" value="TreeGrafter"/>
</dbReference>
<dbReference type="GO" id="GO:0005524">
    <property type="term" value="F:ATP binding"/>
    <property type="evidence" value="ECO:0007669"/>
    <property type="project" value="UniProtKB-KW"/>
</dbReference>
<dbReference type="GO" id="GO:0004592">
    <property type="term" value="F:pantoate-beta-alanine ligase activity"/>
    <property type="evidence" value="ECO:0007669"/>
    <property type="project" value="UniProtKB-UniRule"/>
</dbReference>
<dbReference type="GO" id="GO:0015940">
    <property type="term" value="P:pantothenate biosynthetic process"/>
    <property type="evidence" value="ECO:0007669"/>
    <property type="project" value="UniProtKB-UniRule"/>
</dbReference>
<dbReference type="CDD" id="cd00560">
    <property type="entry name" value="PanC"/>
    <property type="match status" value="1"/>
</dbReference>
<dbReference type="FunFam" id="3.30.1300.10:FF:000001">
    <property type="entry name" value="Pantothenate synthetase"/>
    <property type="match status" value="1"/>
</dbReference>
<dbReference type="FunFam" id="3.40.50.620:FF:000013">
    <property type="entry name" value="Pantothenate synthetase"/>
    <property type="match status" value="1"/>
</dbReference>
<dbReference type="Gene3D" id="3.40.50.620">
    <property type="entry name" value="HUPs"/>
    <property type="match status" value="1"/>
</dbReference>
<dbReference type="Gene3D" id="3.30.1300.10">
    <property type="entry name" value="Pantoate-beta-alanine ligase, C-terminal domain"/>
    <property type="match status" value="1"/>
</dbReference>
<dbReference type="HAMAP" id="MF_00158">
    <property type="entry name" value="PanC"/>
    <property type="match status" value="1"/>
</dbReference>
<dbReference type="InterPro" id="IPR003721">
    <property type="entry name" value="Pantoate_ligase"/>
</dbReference>
<dbReference type="InterPro" id="IPR042176">
    <property type="entry name" value="Pantoate_ligase_C"/>
</dbReference>
<dbReference type="InterPro" id="IPR014729">
    <property type="entry name" value="Rossmann-like_a/b/a_fold"/>
</dbReference>
<dbReference type="NCBIfam" id="TIGR00018">
    <property type="entry name" value="panC"/>
    <property type="match status" value="1"/>
</dbReference>
<dbReference type="PANTHER" id="PTHR21299">
    <property type="entry name" value="CYTIDYLATE KINASE/PANTOATE-BETA-ALANINE LIGASE"/>
    <property type="match status" value="1"/>
</dbReference>
<dbReference type="PANTHER" id="PTHR21299:SF1">
    <property type="entry name" value="PANTOATE--BETA-ALANINE LIGASE"/>
    <property type="match status" value="1"/>
</dbReference>
<dbReference type="Pfam" id="PF02569">
    <property type="entry name" value="Pantoate_ligase"/>
    <property type="match status" value="1"/>
</dbReference>
<dbReference type="SUPFAM" id="SSF52374">
    <property type="entry name" value="Nucleotidylyl transferase"/>
    <property type="match status" value="1"/>
</dbReference>
<protein>
    <recommendedName>
        <fullName evidence="1">Pantothenate synthetase</fullName>
        <shortName evidence="1">PS</shortName>
        <ecNumber evidence="1">6.3.2.1</ecNumber>
    </recommendedName>
    <alternativeName>
        <fullName evidence="1">Pantoate--beta-alanine ligase</fullName>
    </alternativeName>
    <alternativeName>
        <fullName evidence="1">Pantoate-activating enzyme</fullName>
    </alternativeName>
</protein>
<sequence length="283" mass="31419">MTKLITTVKEMQHIVKAAKRSGTTIGFIPTMGALHDGHLTMVRESVSTNDITVVSVFVNPLQFGPNEDFDAYPRQIDKDLELVSEVGADIVFHPAVEDMYPGELGIDVKVGPLADVLEGAKRPGHFDGVVTVVNKLFNIVMPDYAYFGKKDAQQLAIVEQMVKDFNHAVEIIGIDIVREADGLAKSSRNVYLTEQERQEAVHLSKSLLLAQALYQDGERQSKVIIDKVTQYLESHISGRIEEVAVYSYPQLVEQHEITGRIFISLAVKFSKARLIDNIIIGAE</sequence>
<proteinExistence type="evidence at protein level"/>
<reference key="1">
    <citation type="journal article" date="2004" name="Proc. Natl. Acad. Sci. U.S.A.">
        <title>Complete genomes of two clinical Staphylococcus aureus strains: evidence for the rapid evolution of virulence and drug resistance.</title>
        <authorList>
            <person name="Holden M.T.G."/>
            <person name="Feil E.J."/>
            <person name="Lindsay J.A."/>
            <person name="Peacock S.J."/>
            <person name="Day N.P.J."/>
            <person name="Enright M.C."/>
            <person name="Foster T.J."/>
            <person name="Moore C.E."/>
            <person name="Hurst L."/>
            <person name="Atkin R."/>
            <person name="Barron A."/>
            <person name="Bason N."/>
            <person name="Bentley S.D."/>
            <person name="Chillingworth C."/>
            <person name="Chillingworth T."/>
            <person name="Churcher C."/>
            <person name="Clark L."/>
            <person name="Corton C."/>
            <person name="Cronin A."/>
            <person name="Doggett J."/>
            <person name="Dowd L."/>
            <person name="Feltwell T."/>
            <person name="Hance Z."/>
            <person name="Harris B."/>
            <person name="Hauser H."/>
            <person name="Holroyd S."/>
            <person name="Jagels K."/>
            <person name="James K.D."/>
            <person name="Lennard N."/>
            <person name="Line A."/>
            <person name="Mayes R."/>
            <person name="Moule S."/>
            <person name="Mungall K."/>
            <person name="Ormond D."/>
            <person name="Quail M.A."/>
            <person name="Rabbinowitsch E."/>
            <person name="Rutherford K.M."/>
            <person name="Sanders M."/>
            <person name="Sharp S."/>
            <person name="Simmonds M."/>
            <person name="Stevens K."/>
            <person name="Whitehead S."/>
            <person name="Barrell B.G."/>
            <person name="Spratt B.G."/>
            <person name="Parkhill J."/>
        </authorList>
    </citation>
    <scope>NUCLEOTIDE SEQUENCE [LARGE SCALE GENOMIC DNA]</scope>
    <source>
        <strain>MRSA252</strain>
    </source>
</reference>
<gene>
    <name evidence="1" type="primary">panC</name>
    <name type="ordered locus">SAR2676</name>
</gene>